<gene>
    <name evidence="1" type="primary">hisS</name>
    <name type="ordered locus">pc0385</name>
</gene>
<keyword id="KW-0030">Aminoacyl-tRNA synthetase</keyword>
<keyword id="KW-0067">ATP-binding</keyword>
<keyword id="KW-0963">Cytoplasm</keyword>
<keyword id="KW-0436">Ligase</keyword>
<keyword id="KW-0547">Nucleotide-binding</keyword>
<keyword id="KW-0648">Protein biosynthesis</keyword>
<keyword id="KW-1185">Reference proteome</keyword>
<protein>
    <recommendedName>
        <fullName evidence="1">Histidine--tRNA ligase</fullName>
        <ecNumber evidence="1">6.1.1.21</ecNumber>
    </recommendedName>
    <alternativeName>
        <fullName evidence="1">Histidyl-tRNA synthetase</fullName>
        <shortName evidence="1">HisRS</shortName>
    </alternativeName>
</protein>
<feature type="chain" id="PRO_0000136215" description="Histidine--tRNA ligase">
    <location>
        <begin position="1"/>
        <end position="424"/>
    </location>
</feature>
<dbReference type="EC" id="6.1.1.21" evidence="1"/>
<dbReference type="EMBL" id="BX908798">
    <property type="protein sequence ID" value="CAF23109.1"/>
    <property type="molecule type" value="Genomic_DNA"/>
</dbReference>
<dbReference type="RefSeq" id="WP_011174935.1">
    <property type="nucleotide sequence ID" value="NC_005861.2"/>
</dbReference>
<dbReference type="SMR" id="Q6ME90"/>
<dbReference type="STRING" id="264201.pc0385"/>
<dbReference type="KEGG" id="pcu:PC_RS01885"/>
<dbReference type="eggNOG" id="COG0124">
    <property type="taxonomic scope" value="Bacteria"/>
</dbReference>
<dbReference type="HOGENOM" id="CLU_025113_1_1_0"/>
<dbReference type="OrthoDB" id="9800814at2"/>
<dbReference type="Proteomes" id="UP000000529">
    <property type="component" value="Chromosome"/>
</dbReference>
<dbReference type="GO" id="GO:0005737">
    <property type="term" value="C:cytoplasm"/>
    <property type="evidence" value="ECO:0007669"/>
    <property type="project" value="UniProtKB-SubCell"/>
</dbReference>
<dbReference type="GO" id="GO:0005524">
    <property type="term" value="F:ATP binding"/>
    <property type="evidence" value="ECO:0007669"/>
    <property type="project" value="UniProtKB-UniRule"/>
</dbReference>
<dbReference type="GO" id="GO:0004821">
    <property type="term" value="F:histidine-tRNA ligase activity"/>
    <property type="evidence" value="ECO:0007669"/>
    <property type="project" value="UniProtKB-UniRule"/>
</dbReference>
<dbReference type="GO" id="GO:0006427">
    <property type="term" value="P:histidyl-tRNA aminoacylation"/>
    <property type="evidence" value="ECO:0007669"/>
    <property type="project" value="UniProtKB-UniRule"/>
</dbReference>
<dbReference type="CDD" id="cd00773">
    <property type="entry name" value="HisRS-like_core"/>
    <property type="match status" value="1"/>
</dbReference>
<dbReference type="CDD" id="cd00859">
    <property type="entry name" value="HisRS_anticodon"/>
    <property type="match status" value="1"/>
</dbReference>
<dbReference type="Gene3D" id="3.40.50.800">
    <property type="entry name" value="Anticodon-binding domain"/>
    <property type="match status" value="1"/>
</dbReference>
<dbReference type="Gene3D" id="3.30.930.10">
    <property type="entry name" value="Bira Bifunctional Protein, Domain 2"/>
    <property type="match status" value="1"/>
</dbReference>
<dbReference type="HAMAP" id="MF_00127">
    <property type="entry name" value="His_tRNA_synth"/>
    <property type="match status" value="1"/>
</dbReference>
<dbReference type="InterPro" id="IPR006195">
    <property type="entry name" value="aa-tRNA-synth_II"/>
</dbReference>
<dbReference type="InterPro" id="IPR045864">
    <property type="entry name" value="aa-tRNA-synth_II/BPL/LPL"/>
</dbReference>
<dbReference type="InterPro" id="IPR004154">
    <property type="entry name" value="Anticodon-bd"/>
</dbReference>
<dbReference type="InterPro" id="IPR036621">
    <property type="entry name" value="Anticodon-bd_dom_sf"/>
</dbReference>
<dbReference type="InterPro" id="IPR015807">
    <property type="entry name" value="His-tRNA-ligase"/>
</dbReference>
<dbReference type="InterPro" id="IPR041715">
    <property type="entry name" value="HisRS-like_core"/>
</dbReference>
<dbReference type="InterPro" id="IPR004516">
    <property type="entry name" value="HisRS/HisZ"/>
</dbReference>
<dbReference type="InterPro" id="IPR033656">
    <property type="entry name" value="HisRS_anticodon"/>
</dbReference>
<dbReference type="NCBIfam" id="TIGR00442">
    <property type="entry name" value="hisS"/>
    <property type="match status" value="1"/>
</dbReference>
<dbReference type="PANTHER" id="PTHR43707:SF1">
    <property type="entry name" value="HISTIDINE--TRNA LIGASE, MITOCHONDRIAL-RELATED"/>
    <property type="match status" value="1"/>
</dbReference>
<dbReference type="PANTHER" id="PTHR43707">
    <property type="entry name" value="HISTIDYL-TRNA SYNTHETASE"/>
    <property type="match status" value="1"/>
</dbReference>
<dbReference type="Pfam" id="PF03129">
    <property type="entry name" value="HGTP_anticodon"/>
    <property type="match status" value="1"/>
</dbReference>
<dbReference type="Pfam" id="PF13393">
    <property type="entry name" value="tRNA-synt_His"/>
    <property type="match status" value="1"/>
</dbReference>
<dbReference type="PIRSF" id="PIRSF001549">
    <property type="entry name" value="His-tRNA_synth"/>
    <property type="match status" value="1"/>
</dbReference>
<dbReference type="SUPFAM" id="SSF52954">
    <property type="entry name" value="Class II aaRS ABD-related"/>
    <property type="match status" value="1"/>
</dbReference>
<dbReference type="SUPFAM" id="SSF55681">
    <property type="entry name" value="Class II aaRS and biotin synthetases"/>
    <property type="match status" value="1"/>
</dbReference>
<dbReference type="PROSITE" id="PS50862">
    <property type="entry name" value="AA_TRNA_LIGASE_II"/>
    <property type="match status" value="1"/>
</dbReference>
<proteinExistence type="inferred from homology"/>
<sequence length="424" mass="48241">MKFSIPPGVFDIIPTNTQEIWKSSYLWDFVERTIRKTVRDYGYQEIRTPLFERTELFQRSVGETSDIISKEMYTFEDKGGRSMSLRPEGTAPVMRSFIENQLHTIAPLQKLFYIAPMFRYERAQAGRYRQHHQFGAEAIGNSSPEQDAELIDLLYTLYKRLGLQNLSLNINSIGTISCRHTFRQALKDYLKPHLNNLSSDSQNRFETNPLRILDSKNAQDKQIVADAPSILDFLDEDSQIHFEQLKKLLKQLKIPYQVNPLLVRGLDYYNKTVFEVVVGELGAQNSIGGGGRYDGLLRELGGPDLPSIGFGTGIERIIQTMINQGIPLPSPCHPSLFLIPMGDEAKQLCFTLTHELRQQGIPTQMDFSGKKLGKVLQYADQIESTYVVVIGENELQTQEIELKELASGKKYKLTIDELAPTLKN</sequence>
<comment type="catalytic activity">
    <reaction evidence="1">
        <text>tRNA(His) + L-histidine + ATP = L-histidyl-tRNA(His) + AMP + diphosphate + H(+)</text>
        <dbReference type="Rhea" id="RHEA:17313"/>
        <dbReference type="Rhea" id="RHEA-COMP:9665"/>
        <dbReference type="Rhea" id="RHEA-COMP:9689"/>
        <dbReference type="ChEBI" id="CHEBI:15378"/>
        <dbReference type="ChEBI" id="CHEBI:30616"/>
        <dbReference type="ChEBI" id="CHEBI:33019"/>
        <dbReference type="ChEBI" id="CHEBI:57595"/>
        <dbReference type="ChEBI" id="CHEBI:78442"/>
        <dbReference type="ChEBI" id="CHEBI:78527"/>
        <dbReference type="ChEBI" id="CHEBI:456215"/>
        <dbReference type="EC" id="6.1.1.21"/>
    </reaction>
</comment>
<comment type="subunit">
    <text evidence="1">Homodimer.</text>
</comment>
<comment type="subcellular location">
    <subcellularLocation>
        <location evidence="1">Cytoplasm</location>
    </subcellularLocation>
</comment>
<comment type="similarity">
    <text evidence="1">Belongs to the class-II aminoacyl-tRNA synthetase family.</text>
</comment>
<accession>Q6ME90</accession>
<reference key="1">
    <citation type="journal article" date="2004" name="Science">
        <title>Illuminating the evolutionary history of chlamydiae.</title>
        <authorList>
            <person name="Horn M."/>
            <person name="Collingro A."/>
            <person name="Schmitz-Esser S."/>
            <person name="Beier C.L."/>
            <person name="Purkhold U."/>
            <person name="Fartmann B."/>
            <person name="Brandt P."/>
            <person name="Nyakatura G.J."/>
            <person name="Droege M."/>
            <person name="Frishman D."/>
            <person name="Rattei T."/>
            <person name="Mewes H.-W."/>
            <person name="Wagner M."/>
        </authorList>
    </citation>
    <scope>NUCLEOTIDE SEQUENCE [LARGE SCALE GENOMIC DNA]</scope>
    <source>
        <strain>UWE25</strain>
    </source>
</reference>
<name>SYH_PARUW</name>
<organism>
    <name type="scientific">Protochlamydia amoebophila (strain UWE25)</name>
    <dbReference type="NCBI Taxonomy" id="264201"/>
    <lineage>
        <taxon>Bacteria</taxon>
        <taxon>Pseudomonadati</taxon>
        <taxon>Chlamydiota</taxon>
        <taxon>Chlamydiia</taxon>
        <taxon>Parachlamydiales</taxon>
        <taxon>Parachlamydiaceae</taxon>
        <taxon>Candidatus Protochlamydia</taxon>
    </lineage>
</organism>
<evidence type="ECO:0000255" key="1">
    <source>
        <dbReference type="HAMAP-Rule" id="MF_00127"/>
    </source>
</evidence>